<organism>
    <name type="scientific">Hahella chejuensis (strain KCTC 2396)</name>
    <dbReference type="NCBI Taxonomy" id="349521"/>
    <lineage>
        <taxon>Bacteria</taxon>
        <taxon>Pseudomonadati</taxon>
        <taxon>Pseudomonadota</taxon>
        <taxon>Gammaproteobacteria</taxon>
        <taxon>Oceanospirillales</taxon>
        <taxon>Hahellaceae</taxon>
        <taxon>Hahella</taxon>
    </lineage>
</organism>
<proteinExistence type="inferred from homology"/>
<accession>Q2S9T1</accession>
<evidence type="ECO:0000255" key="1">
    <source>
        <dbReference type="HAMAP-Rule" id="MF_01363"/>
    </source>
</evidence>
<evidence type="ECO:0000305" key="2"/>
<reference key="1">
    <citation type="journal article" date="2005" name="Nucleic Acids Res.">
        <title>Genomic blueprint of Hahella chejuensis, a marine microbe producing an algicidal agent.</title>
        <authorList>
            <person name="Jeong H."/>
            <person name="Yim J.H."/>
            <person name="Lee C."/>
            <person name="Choi S.-H."/>
            <person name="Park Y.K."/>
            <person name="Yoon S.H."/>
            <person name="Hur C.-G."/>
            <person name="Kang H.-Y."/>
            <person name="Kim D."/>
            <person name="Lee H.H."/>
            <person name="Park K.H."/>
            <person name="Park S.-H."/>
            <person name="Park H.-S."/>
            <person name="Lee H.K."/>
            <person name="Oh T.K."/>
            <person name="Kim J.F."/>
        </authorList>
    </citation>
    <scope>NUCLEOTIDE SEQUENCE [LARGE SCALE GENOMIC DNA]</scope>
    <source>
        <strain>KCTC 2396</strain>
    </source>
</reference>
<feature type="chain" id="PRO_0000269326" description="Large ribosomal subunit protein bL21">
    <location>
        <begin position="1"/>
        <end position="103"/>
    </location>
</feature>
<dbReference type="EMBL" id="CP000155">
    <property type="protein sequence ID" value="ABC32593.1"/>
    <property type="molecule type" value="Genomic_DNA"/>
</dbReference>
<dbReference type="RefSeq" id="WP_011399651.1">
    <property type="nucleotide sequence ID" value="NC_007645.1"/>
</dbReference>
<dbReference type="SMR" id="Q2S9T1"/>
<dbReference type="STRING" id="349521.HCH_05941"/>
<dbReference type="KEGG" id="hch:HCH_05941"/>
<dbReference type="eggNOG" id="COG0261">
    <property type="taxonomic scope" value="Bacteria"/>
</dbReference>
<dbReference type="HOGENOM" id="CLU_061463_3_2_6"/>
<dbReference type="OrthoDB" id="9813334at2"/>
<dbReference type="Proteomes" id="UP000000238">
    <property type="component" value="Chromosome"/>
</dbReference>
<dbReference type="GO" id="GO:0005737">
    <property type="term" value="C:cytoplasm"/>
    <property type="evidence" value="ECO:0007669"/>
    <property type="project" value="UniProtKB-ARBA"/>
</dbReference>
<dbReference type="GO" id="GO:1990904">
    <property type="term" value="C:ribonucleoprotein complex"/>
    <property type="evidence" value="ECO:0007669"/>
    <property type="project" value="UniProtKB-KW"/>
</dbReference>
<dbReference type="GO" id="GO:0005840">
    <property type="term" value="C:ribosome"/>
    <property type="evidence" value="ECO:0007669"/>
    <property type="project" value="UniProtKB-KW"/>
</dbReference>
<dbReference type="GO" id="GO:0019843">
    <property type="term" value="F:rRNA binding"/>
    <property type="evidence" value="ECO:0007669"/>
    <property type="project" value="UniProtKB-UniRule"/>
</dbReference>
<dbReference type="GO" id="GO:0003735">
    <property type="term" value="F:structural constituent of ribosome"/>
    <property type="evidence" value="ECO:0007669"/>
    <property type="project" value="InterPro"/>
</dbReference>
<dbReference type="GO" id="GO:0006412">
    <property type="term" value="P:translation"/>
    <property type="evidence" value="ECO:0007669"/>
    <property type="project" value="UniProtKB-UniRule"/>
</dbReference>
<dbReference type="HAMAP" id="MF_01363">
    <property type="entry name" value="Ribosomal_bL21"/>
    <property type="match status" value="1"/>
</dbReference>
<dbReference type="InterPro" id="IPR028909">
    <property type="entry name" value="bL21-like"/>
</dbReference>
<dbReference type="InterPro" id="IPR036164">
    <property type="entry name" value="bL21-like_sf"/>
</dbReference>
<dbReference type="InterPro" id="IPR001787">
    <property type="entry name" value="Ribosomal_bL21"/>
</dbReference>
<dbReference type="InterPro" id="IPR018258">
    <property type="entry name" value="Ribosomal_bL21_CS"/>
</dbReference>
<dbReference type="NCBIfam" id="TIGR00061">
    <property type="entry name" value="L21"/>
    <property type="match status" value="1"/>
</dbReference>
<dbReference type="PANTHER" id="PTHR21349">
    <property type="entry name" value="50S RIBOSOMAL PROTEIN L21"/>
    <property type="match status" value="1"/>
</dbReference>
<dbReference type="PANTHER" id="PTHR21349:SF0">
    <property type="entry name" value="LARGE RIBOSOMAL SUBUNIT PROTEIN BL21M"/>
    <property type="match status" value="1"/>
</dbReference>
<dbReference type="Pfam" id="PF00829">
    <property type="entry name" value="Ribosomal_L21p"/>
    <property type="match status" value="1"/>
</dbReference>
<dbReference type="SUPFAM" id="SSF141091">
    <property type="entry name" value="L21p-like"/>
    <property type="match status" value="1"/>
</dbReference>
<dbReference type="PROSITE" id="PS01169">
    <property type="entry name" value="RIBOSOMAL_L21"/>
    <property type="match status" value="1"/>
</dbReference>
<protein>
    <recommendedName>
        <fullName evidence="1">Large ribosomal subunit protein bL21</fullName>
    </recommendedName>
    <alternativeName>
        <fullName evidence="2">50S ribosomal protein L21</fullName>
    </alternativeName>
</protein>
<name>RL21_HAHCH</name>
<comment type="function">
    <text evidence="1">This protein binds to 23S rRNA in the presence of protein L20.</text>
</comment>
<comment type="subunit">
    <text evidence="1">Part of the 50S ribosomal subunit. Contacts protein L20.</text>
</comment>
<comment type="similarity">
    <text evidence="1">Belongs to the bacterial ribosomal protein bL21 family.</text>
</comment>
<sequence>MYAVIVSGGKQHRVKEGERLKLEKIEVETGGVVEFDKVLLVANGDDVKVGAPVVEGAKVTAEVVAHGRHKKVNIIKFRRRKHHMKRMGHRQWFTEVKITGITG</sequence>
<gene>
    <name evidence="1" type="primary">rplU</name>
    <name type="ordered locus">HCH_05941</name>
</gene>
<keyword id="KW-1185">Reference proteome</keyword>
<keyword id="KW-0687">Ribonucleoprotein</keyword>
<keyword id="KW-0689">Ribosomal protein</keyword>
<keyword id="KW-0694">RNA-binding</keyword>
<keyword id="KW-0699">rRNA-binding</keyword>